<accession>B7JKV4</accession>
<comment type="function">
    <text evidence="1">Catalyzes the conversion of N-acetyl-diaminopimelate to diaminopimelate and acetate.</text>
</comment>
<comment type="catalytic activity">
    <reaction evidence="1">
        <text>N-acetyl-(2S,6S)-2,6-diaminopimelate + H2O = (2S,6S)-2,6-diaminopimelate + acetate</text>
        <dbReference type="Rhea" id="RHEA:20405"/>
        <dbReference type="ChEBI" id="CHEBI:15377"/>
        <dbReference type="ChEBI" id="CHEBI:30089"/>
        <dbReference type="ChEBI" id="CHEBI:57609"/>
        <dbReference type="ChEBI" id="CHEBI:58767"/>
        <dbReference type="EC" id="3.5.1.47"/>
    </reaction>
</comment>
<comment type="pathway">
    <text evidence="1">Amino-acid biosynthesis; L-lysine biosynthesis via DAP pathway; LL-2,6-diaminopimelate from (S)-tetrahydrodipicolinate (acetylase route): step 3/3.</text>
</comment>
<comment type="similarity">
    <text evidence="1">Belongs to the peptidase M20A family. N-acetyldiaminopimelate deacetylase subfamily.</text>
</comment>
<dbReference type="EC" id="3.5.1.47" evidence="1"/>
<dbReference type="EMBL" id="CP001283">
    <property type="protein sequence ID" value="ACK91762.1"/>
    <property type="molecule type" value="Genomic_DNA"/>
</dbReference>
<dbReference type="RefSeq" id="WP_000301165.1">
    <property type="nucleotide sequence ID" value="NC_011773.1"/>
</dbReference>
<dbReference type="SMR" id="B7JKV4"/>
<dbReference type="MEROPS" id="M20.A27"/>
<dbReference type="KEGG" id="bcu:BCAH820_3995"/>
<dbReference type="HOGENOM" id="CLU_023257_0_1_9"/>
<dbReference type="UniPathway" id="UPA00034">
    <property type="reaction ID" value="UER00024"/>
</dbReference>
<dbReference type="Proteomes" id="UP000001363">
    <property type="component" value="Chromosome"/>
</dbReference>
<dbReference type="GO" id="GO:0050118">
    <property type="term" value="F:N-acetyldiaminopimelate deacetylase activity"/>
    <property type="evidence" value="ECO:0007669"/>
    <property type="project" value="UniProtKB-UniRule"/>
</dbReference>
<dbReference type="GO" id="GO:0019877">
    <property type="term" value="P:diaminopimelate biosynthetic process"/>
    <property type="evidence" value="ECO:0007669"/>
    <property type="project" value="UniProtKB-UniRule"/>
</dbReference>
<dbReference type="GO" id="GO:0009089">
    <property type="term" value="P:lysine biosynthetic process via diaminopimelate"/>
    <property type="evidence" value="ECO:0007669"/>
    <property type="project" value="UniProtKB-UniRule"/>
</dbReference>
<dbReference type="CDD" id="cd05670">
    <property type="entry name" value="M20_Acy1_YkuR-like"/>
    <property type="match status" value="1"/>
</dbReference>
<dbReference type="FunFam" id="3.30.70.360:FF:000001">
    <property type="entry name" value="N-acetyldiaminopimelate deacetylase"/>
    <property type="match status" value="1"/>
</dbReference>
<dbReference type="Gene3D" id="3.30.70.360">
    <property type="match status" value="1"/>
</dbReference>
<dbReference type="Gene3D" id="3.40.630.10">
    <property type="entry name" value="Zn peptidases"/>
    <property type="match status" value="1"/>
</dbReference>
<dbReference type="HAMAP" id="MF_01692">
    <property type="entry name" value="DapEL"/>
    <property type="match status" value="1"/>
</dbReference>
<dbReference type="InterPro" id="IPR023905">
    <property type="entry name" value="AcetylDAP_deacetylase"/>
</dbReference>
<dbReference type="InterPro" id="IPR017439">
    <property type="entry name" value="Amidohydrolase"/>
</dbReference>
<dbReference type="InterPro" id="IPR036264">
    <property type="entry name" value="Bact_exopeptidase_dim_dom"/>
</dbReference>
<dbReference type="InterPro" id="IPR002933">
    <property type="entry name" value="Peptidase_M20"/>
</dbReference>
<dbReference type="InterPro" id="IPR011650">
    <property type="entry name" value="Peptidase_M20_dimer"/>
</dbReference>
<dbReference type="NCBIfam" id="TIGR01891">
    <property type="entry name" value="amidohydrolases"/>
    <property type="match status" value="1"/>
</dbReference>
<dbReference type="PANTHER" id="PTHR11014:SF98">
    <property type="entry name" value="N-ACETYLDIAMINOPIMELATE DEACETYLASE"/>
    <property type="match status" value="1"/>
</dbReference>
<dbReference type="PANTHER" id="PTHR11014">
    <property type="entry name" value="PEPTIDASE M20 FAMILY MEMBER"/>
    <property type="match status" value="1"/>
</dbReference>
<dbReference type="Pfam" id="PF07687">
    <property type="entry name" value="M20_dimer"/>
    <property type="match status" value="1"/>
</dbReference>
<dbReference type="Pfam" id="PF01546">
    <property type="entry name" value="Peptidase_M20"/>
    <property type="match status" value="1"/>
</dbReference>
<dbReference type="PIRSF" id="PIRSF005962">
    <property type="entry name" value="Pept_M20D_amidohydro"/>
    <property type="match status" value="1"/>
</dbReference>
<dbReference type="SUPFAM" id="SSF55031">
    <property type="entry name" value="Bacterial exopeptidase dimerisation domain"/>
    <property type="match status" value="1"/>
</dbReference>
<dbReference type="SUPFAM" id="SSF53187">
    <property type="entry name" value="Zn-dependent exopeptidases"/>
    <property type="match status" value="1"/>
</dbReference>
<organism>
    <name type="scientific">Bacillus cereus (strain AH820)</name>
    <dbReference type="NCBI Taxonomy" id="405535"/>
    <lineage>
        <taxon>Bacteria</taxon>
        <taxon>Bacillati</taxon>
        <taxon>Bacillota</taxon>
        <taxon>Bacilli</taxon>
        <taxon>Bacillales</taxon>
        <taxon>Bacillaceae</taxon>
        <taxon>Bacillus</taxon>
        <taxon>Bacillus cereus group</taxon>
    </lineage>
</organism>
<reference key="1">
    <citation type="submission" date="2008-10" db="EMBL/GenBank/DDBJ databases">
        <title>Genome sequence of Bacillus cereus AH820.</title>
        <authorList>
            <person name="Dodson R.J."/>
            <person name="Durkin A.S."/>
            <person name="Rosovitz M.J."/>
            <person name="Rasko D.A."/>
            <person name="Hoffmaster A."/>
            <person name="Ravel J."/>
            <person name="Sutton G."/>
        </authorList>
    </citation>
    <scope>NUCLEOTIDE SEQUENCE [LARGE SCALE GENOMIC DNA]</scope>
    <source>
        <strain>AH820</strain>
    </source>
</reference>
<evidence type="ECO:0000255" key="1">
    <source>
        <dbReference type="HAMAP-Rule" id="MF_01692"/>
    </source>
</evidence>
<feature type="chain" id="PRO_0000376738" description="N-acetyldiaminopimelate deacetylase">
    <location>
        <begin position="1"/>
        <end position="376"/>
    </location>
</feature>
<feature type="active site" evidence="1">
    <location>
        <position position="69"/>
    </location>
</feature>
<feature type="active site" description="Proton acceptor" evidence="1">
    <location>
        <position position="128"/>
    </location>
</feature>
<name>DAPEL_BACC0</name>
<protein>
    <recommendedName>
        <fullName evidence="1">N-acetyldiaminopimelate deacetylase</fullName>
        <ecNumber evidence="1">3.5.1.47</ecNumber>
    </recommendedName>
</protein>
<proteinExistence type="inferred from homology"/>
<gene>
    <name type="ordered locus">BCAH820_3995</name>
</gene>
<keyword id="KW-0028">Amino-acid biosynthesis</keyword>
<keyword id="KW-0220">Diaminopimelate biosynthesis</keyword>
<keyword id="KW-0378">Hydrolase</keyword>
<keyword id="KW-0457">Lysine biosynthesis</keyword>
<sequence>MAVSKFVQIRRDLHKIPEIGFKEWKTQQYILDYIGTLSNEHVEVKVWRTGVIVKVKGKNPEKVIGYRADIDGLPITEETGYEFASVHEGMMHACGHDLHTTIGLGLLTAAVTERIDDDLVFLFQPAEEGPGGALPMLESEELKEWKPNIILGLHIAPEYPVGTIATKEGLLFANTSELYVDLKGKGGHAAYPHTANDMIVAASHLVTQLQSVISRNVNPLDSAVITIGKITGGTVQNIIAEKSRLEGTIRTLSVESMSRVKSRIEAIVAGIEASFQCEAVIDYGAMYHQVYNHEALTREFMQFVSEQTDMKVITCTEAMTGEDFGYMLQEIPGFMFWLGVNSEYGLHHAKLKPDEEAIEKAIVFLDQYVKWKGTRK</sequence>